<keyword id="KW-0131">Cell cycle</keyword>
<keyword id="KW-0132">Cell division</keyword>
<keyword id="KW-0175">Coiled coil</keyword>
<keyword id="KW-0963">Cytoplasm</keyword>
<keyword id="KW-0206">Cytoskeleton</keyword>
<keyword id="KW-1185">Reference proteome</keyword>
<keyword id="KW-0717">Septation</keyword>
<accession>Q9JI08</accession>
<gene>
    <name type="primary">Bin3</name>
</gene>
<organism>
    <name type="scientific">Mus musculus</name>
    <name type="common">Mouse</name>
    <dbReference type="NCBI Taxonomy" id="10090"/>
    <lineage>
        <taxon>Eukaryota</taxon>
        <taxon>Metazoa</taxon>
        <taxon>Chordata</taxon>
        <taxon>Craniata</taxon>
        <taxon>Vertebrata</taxon>
        <taxon>Euteleostomi</taxon>
        <taxon>Mammalia</taxon>
        <taxon>Eutheria</taxon>
        <taxon>Euarchontoglires</taxon>
        <taxon>Glires</taxon>
        <taxon>Rodentia</taxon>
        <taxon>Myomorpha</taxon>
        <taxon>Muroidea</taxon>
        <taxon>Muridae</taxon>
        <taxon>Murinae</taxon>
        <taxon>Mus</taxon>
        <taxon>Mus</taxon>
    </lineage>
</organism>
<name>BIN3_MOUSE</name>
<protein>
    <recommendedName>
        <fullName>Bridging integrator 3</fullName>
    </recommendedName>
</protein>
<feature type="chain" id="PRO_0000192956" description="Bridging integrator 3">
    <location>
        <begin position="1"/>
        <end position="253"/>
    </location>
</feature>
<feature type="domain" description="BAR" evidence="3">
    <location>
        <begin position="9"/>
        <end position="232"/>
    </location>
</feature>
<feature type="region of interest" description="Disordered" evidence="4">
    <location>
        <begin position="222"/>
        <end position="241"/>
    </location>
</feature>
<feature type="coiled-coil region" evidence="2">
    <location>
        <begin position="16"/>
        <end position="57"/>
    </location>
</feature>
<feature type="coiled-coil region" evidence="2">
    <location>
        <begin position="120"/>
        <end position="151"/>
    </location>
</feature>
<feature type="compositionally biased region" description="Basic and acidic residues" evidence="4">
    <location>
        <begin position="227"/>
        <end position="241"/>
    </location>
</feature>
<reference key="1">
    <citation type="journal article" date="2001" name="J. Biol. Chem.">
        <title>Human BIN3 complements the F-actin localization defects caused by loss of Hob3p, the fission yeast homolog of Rvs161p.</title>
        <authorList>
            <person name="Routhier E.L."/>
            <person name="Burn T.C."/>
            <person name="Abbaszade I."/>
            <person name="Summers M."/>
            <person name="Albright C.F."/>
            <person name="Prendergast G.C."/>
        </authorList>
    </citation>
    <scope>NUCLEOTIDE SEQUENCE [MRNA]</scope>
</reference>
<reference key="2">
    <citation type="submission" date="2000-03" db="EMBL/GenBank/DDBJ databases">
        <title>A mouse homolog of Saccharomyces cerevisiae RVS161 gene.</title>
        <authorList>
            <person name="Marcucci M.J."/>
            <person name="Slepnev V.I."/>
            <person name="De Camilli P.V."/>
        </authorList>
    </citation>
    <scope>NUCLEOTIDE SEQUENCE [MRNA]</scope>
</reference>
<reference key="3">
    <citation type="journal article" date="2005" name="Science">
        <title>The transcriptional landscape of the mammalian genome.</title>
        <authorList>
            <person name="Carninci P."/>
            <person name="Kasukawa T."/>
            <person name="Katayama S."/>
            <person name="Gough J."/>
            <person name="Frith M.C."/>
            <person name="Maeda N."/>
            <person name="Oyama R."/>
            <person name="Ravasi T."/>
            <person name="Lenhard B."/>
            <person name="Wells C."/>
            <person name="Kodzius R."/>
            <person name="Shimokawa K."/>
            <person name="Bajic V.B."/>
            <person name="Brenner S.E."/>
            <person name="Batalov S."/>
            <person name="Forrest A.R."/>
            <person name="Zavolan M."/>
            <person name="Davis M.J."/>
            <person name="Wilming L.G."/>
            <person name="Aidinis V."/>
            <person name="Allen J.E."/>
            <person name="Ambesi-Impiombato A."/>
            <person name="Apweiler R."/>
            <person name="Aturaliya R.N."/>
            <person name="Bailey T.L."/>
            <person name="Bansal M."/>
            <person name="Baxter L."/>
            <person name="Beisel K.W."/>
            <person name="Bersano T."/>
            <person name="Bono H."/>
            <person name="Chalk A.M."/>
            <person name="Chiu K.P."/>
            <person name="Choudhary V."/>
            <person name="Christoffels A."/>
            <person name="Clutterbuck D.R."/>
            <person name="Crowe M.L."/>
            <person name="Dalla E."/>
            <person name="Dalrymple B.P."/>
            <person name="de Bono B."/>
            <person name="Della Gatta G."/>
            <person name="di Bernardo D."/>
            <person name="Down T."/>
            <person name="Engstrom P."/>
            <person name="Fagiolini M."/>
            <person name="Faulkner G."/>
            <person name="Fletcher C.F."/>
            <person name="Fukushima T."/>
            <person name="Furuno M."/>
            <person name="Futaki S."/>
            <person name="Gariboldi M."/>
            <person name="Georgii-Hemming P."/>
            <person name="Gingeras T.R."/>
            <person name="Gojobori T."/>
            <person name="Green R.E."/>
            <person name="Gustincich S."/>
            <person name="Harbers M."/>
            <person name="Hayashi Y."/>
            <person name="Hensch T.K."/>
            <person name="Hirokawa N."/>
            <person name="Hill D."/>
            <person name="Huminiecki L."/>
            <person name="Iacono M."/>
            <person name="Ikeo K."/>
            <person name="Iwama A."/>
            <person name="Ishikawa T."/>
            <person name="Jakt M."/>
            <person name="Kanapin A."/>
            <person name="Katoh M."/>
            <person name="Kawasawa Y."/>
            <person name="Kelso J."/>
            <person name="Kitamura H."/>
            <person name="Kitano H."/>
            <person name="Kollias G."/>
            <person name="Krishnan S.P."/>
            <person name="Kruger A."/>
            <person name="Kummerfeld S.K."/>
            <person name="Kurochkin I.V."/>
            <person name="Lareau L.F."/>
            <person name="Lazarevic D."/>
            <person name="Lipovich L."/>
            <person name="Liu J."/>
            <person name="Liuni S."/>
            <person name="McWilliam S."/>
            <person name="Madan Babu M."/>
            <person name="Madera M."/>
            <person name="Marchionni L."/>
            <person name="Matsuda H."/>
            <person name="Matsuzawa S."/>
            <person name="Miki H."/>
            <person name="Mignone F."/>
            <person name="Miyake S."/>
            <person name="Morris K."/>
            <person name="Mottagui-Tabar S."/>
            <person name="Mulder N."/>
            <person name="Nakano N."/>
            <person name="Nakauchi H."/>
            <person name="Ng P."/>
            <person name="Nilsson R."/>
            <person name="Nishiguchi S."/>
            <person name="Nishikawa S."/>
            <person name="Nori F."/>
            <person name="Ohara O."/>
            <person name="Okazaki Y."/>
            <person name="Orlando V."/>
            <person name="Pang K.C."/>
            <person name="Pavan W.J."/>
            <person name="Pavesi G."/>
            <person name="Pesole G."/>
            <person name="Petrovsky N."/>
            <person name="Piazza S."/>
            <person name="Reed J."/>
            <person name="Reid J.F."/>
            <person name="Ring B.Z."/>
            <person name="Ringwald M."/>
            <person name="Rost B."/>
            <person name="Ruan Y."/>
            <person name="Salzberg S.L."/>
            <person name="Sandelin A."/>
            <person name="Schneider C."/>
            <person name="Schoenbach C."/>
            <person name="Sekiguchi K."/>
            <person name="Semple C.A."/>
            <person name="Seno S."/>
            <person name="Sessa L."/>
            <person name="Sheng Y."/>
            <person name="Shibata Y."/>
            <person name="Shimada H."/>
            <person name="Shimada K."/>
            <person name="Silva D."/>
            <person name="Sinclair B."/>
            <person name="Sperling S."/>
            <person name="Stupka E."/>
            <person name="Sugiura K."/>
            <person name="Sultana R."/>
            <person name="Takenaka Y."/>
            <person name="Taki K."/>
            <person name="Tammoja K."/>
            <person name="Tan S.L."/>
            <person name="Tang S."/>
            <person name="Taylor M.S."/>
            <person name="Tegner J."/>
            <person name="Teichmann S.A."/>
            <person name="Ueda H.R."/>
            <person name="van Nimwegen E."/>
            <person name="Verardo R."/>
            <person name="Wei C.L."/>
            <person name="Yagi K."/>
            <person name="Yamanishi H."/>
            <person name="Zabarovsky E."/>
            <person name="Zhu S."/>
            <person name="Zimmer A."/>
            <person name="Hide W."/>
            <person name="Bult C."/>
            <person name="Grimmond S.M."/>
            <person name="Teasdale R.D."/>
            <person name="Liu E.T."/>
            <person name="Brusic V."/>
            <person name="Quackenbush J."/>
            <person name="Wahlestedt C."/>
            <person name="Mattick J.S."/>
            <person name="Hume D.A."/>
            <person name="Kai C."/>
            <person name="Sasaki D."/>
            <person name="Tomaru Y."/>
            <person name="Fukuda S."/>
            <person name="Kanamori-Katayama M."/>
            <person name="Suzuki M."/>
            <person name="Aoki J."/>
            <person name="Arakawa T."/>
            <person name="Iida J."/>
            <person name="Imamura K."/>
            <person name="Itoh M."/>
            <person name="Kato T."/>
            <person name="Kawaji H."/>
            <person name="Kawagashira N."/>
            <person name="Kawashima T."/>
            <person name="Kojima M."/>
            <person name="Kondo S."/>
            <person name="Konno H."/>
            <person name="Nakano K."/>
            <person name="Ninomiya N."/>
            <person name="Nishio T."/>
            <person name="Okada M."/>
            <person name="Plessy C."/>
            <person name="Shibata K."/>
            <person name="Shiraki T."/>
            <person name="Suzuki S."/>
            <person name="Tagami M."/>
            <person name="Waki K."/>
            <person name="Watahiki A."/>
            <person name="Okamura-Oho Y."/>
            <person name="Suzuki H."/>
            <person name="Kawai J."/>
            <person name="Hayashizaki Y."/>
        </authorList>
    </citation>
    <scope>NUCLEOTIDE SEQUENCE [LARGE SCALE MRNA]</scope>
    <source>
        <strain>C57BL/6J</strain>
        <tissue>Aorta</tissue>
        <tissue>Testis</tissue>
        <tissue>Vein</tissue>
    </source>
</reference>
<reference key="4">
    <citation type="journal article" date="2004" name="Genome Res.">
        <title>The status, quality, and expansion of the NIH full-length cDNA project: the Mammalian Gene Collection (MGC).</title>
        <authorList>
            <consortium name="The MGC Project Team"/>
        </authorList>
    </citation>
    <scope>NUCLEOTIDE SEQUENCE [LARGE SCALE MRNA]</scope>
    <source>
        <strain>FVB/N</strain>
        <tissue>Kidney</tissue>
    </source>
</reference>
<reference key="5">
    <citation type="journal article" date="2010" name="Cell">
        <title>A tissue-specific atlas of mouse protein phosphorylation and expression.</title>
        <authorList>
            <person name="Huttlin E.L."/>
            <person name="Jedrychowski M.P."/>
            <person name="Elias J.E."/>
            <person name="Goswami T."/>
            <person name="Rad R."/>
            <person name="Beausoleil S.A."/>
            <person name="Villen J."/>
            <person name="Haas W."/>
            <person name="Sowa M.E."/>
            <person name="Gygi S.P."/>
        </authorList>
    </citation>
    <scope>IDENTIFICATION BY MASS SPECTROMETRY [LARGE SCALE ANALYSIS]</scope>
    <source>
        <tissue>Spleen</tissue>
        <tissue>Testis</tissue>
    </source>
</reference>
<comment type="function">
    <text evidence="1">Involved in cytokinesis and septation where it has a role in the localization of F-actin.</text>
</comment>
<comment type="subcellular location">
    <subcellularLocation>
        <location evidence="1">Cytoplasm</location>
        <location evidence="1">Cytoskeleton</location>
    </subcellularLocation>
</comment>
<sequence length="253" mass="29651">MSWIPFKIGQPKKQIVSKTVERDFEREYGKLQQLEEQTKRLQKDMKKSTDADLAMSKSAVKISQDLLSNPLCEQDQDFLHMVTALDTAMKRMDAFNQEKVNQIQKTVIEPLKKFSSIFPSLNMAVKRREQALQDYGRLQAKVEKYEEKEKTGPVLAKLHQAREELRPVREDFEAKNKQLLDEMPRFYGSRLDYFQPSFESLIRAQVIYYSEMHKIFGDLTQQLDQPGHSDEQRERENETKLSELRALSIVADD</sequence>
<dbReference type="EMBL" id="AF271733">
    <property type="protein sequence ID" value="AAF76219.1"/>
    <property type="molecule type" value="mRNA"/>
</dbReference>
<dbReference type="EMBL" id="AF244361">
    <property type="protein sequence ID" value="AAK28356.1"/>
    <property type="molecule type" value="mRNA"/>
</dbReference>
<dbReference type="EMBL" id="AK005992">
    <property type="protein sequence ID" value="BAB24356.1"/>
    <property type="molecule type" value="mRNA"/>
</dbReference>
<dbReference type="EMBL" id="AK040685">
    <property type="protein sequence ID" value="BAC30666.1"/>
    <property type="molecule type" value="mRNA"/>
</dbReference>
<dbReference type="EMBL" id="BC026543">
    <property type="protein sequence ID" value="AAH26543.1"/>
    <property type="molecule type" value="mRNA"/>
</dbReference>
<dbReference type="CCDS" id="CCDS27247.1"/>
<dbReference type="RefSeq" id="NP_067303.1">
    <property type="nucleotide sequence ID" value="NM_021328.4"/>
</dbReference>
<dbReference type="SMR" id="Q9JI08"/>
<dbReference type="BioGRID" id="208330">
    <property type="interactions" value="1"/>
</dbReference>
<dbReference type="FunCoup" id="Q9JI08">
    <property type="interactions" value="473"/>
</dbReference>
<dbReference type="STRING" id="10090.ENSMUSP00000022680"/>
<dbReference type="iPTMnet" id="Q9JI08"/>
<dbReference type="PhosphoSitePlus" id="Q9JI08"/>
<dbReference type="PaxDb" id="10090-ENSMUSP00000022680"/>
<dbReference type="ProteomicsDB" id="273614"/>
<dbReference type="Pumba" id="Q9JI08"/>
<dbReference type="Antibodypedia" id="5285">
    <property type="antibodies" value="357 antibodies from 26 providers"/>
</dbReference>
<dbReference type="DNASU" id="57784"/>
<dbReference type="Ensembl" id="ENSMUST00000022680.9">
    <property type="protein sequence ID" value="ENSMUSP00000022680.8"/>
    <property type="gene ID" value="ENSMUSG00000022089.10"/>
</dbReference>
<dbReference type="GeneID" id="57784"/>
<dbReference type="KEGG" id="mmu:57784"/>
<dbReference type="UCSC" id="uc007une.1">
    <property type="organism name" value="mouse"/>
</dbReference>
<dbReference type="AGR" id="MGI:1929883"/>
<dbReference type="CTD" id="55909"/>
<dbReference type="MGI" id="MGI:1929883">
    <property type="gene designation" value="Bin3"/>
</dbReference>
<dbReference type="VEuPathDB" id="HostDB:ENSMUSG00000022089"/>
<dbReference type="eggNOG" id="KOG3771">
    <property type="taxonomic scope" value="Eukaryota"/>
</dbReference>
<dbReference type="GeneTree" id="ENSGT00950000182882"/>
<dbReference type="HOGENOM" id="CLU_090113_1_0_1"/>
<dbReference type="InParanoid" id="Q9JI08"/>
<dbReference type="OMA" id="TRFCAYF"/>
<dbReference type="OrthoDB" id="446293at2759"/>
<dbReference type="PhylomeDB" id="Q9JI08"/>
<dbReference type="TreeFam" id="TF331711"/>
<dbReference type="BioGRID-ORCS" id="57784">
    <property type="hits" value="0 hits in 76 CRISPR screens"/>
</dbReference>
<dbReference type="ChiTaRS" id="Bin3">
    <property type="organism name" value="mouse"/>
</dbReference>
<dbReference type="PRO" id="PR:Q9JI08"/>
<dbReference type="Proteomes" id="UP000000589">
    <property type="component" value="Chromosome 14"/>
</dbReference>
<dbReference type="RNAct" id="Q9JI08">
    <property type="molecule type" value="protein"/>
</dbReference>
<dbReference type="Bgee" id="ENSMUSG00000022089">
    <property type="expression patterns" value="Expressed in granulocyte and 250 other cell types or tissues"/>
</dbReference>
<dbReference type="ExpressionAtlas" id="Q9JI08">
    <property type="expression patterns" value="baseline and differential"/>
</dbReference>
<dbReference type="GO" id="GO:0015629">
    <property type="term" value="C:actin cytoskeleton"/>
    <property type="evidence" value="ECO:0000314"/>
    <property type="project" value="MGI"/>
</dbReference>
<dbReference type="GO" id="GO:0005737">
    <property type="term" value="C:cytoplasm"/>
    <property type="evidence" value="ECO:0007669"/>
    <property type="project" value="UniProtKB-KW"/>
</dbReference>
<dbReference type="GO" id="GO:0051666">
    <property type="term" value="P:actin cortical patch localization"/>
    <property type="evidence" value="ECO:0007669"/>
    <property type="project" value="InterPro"/>
</dbReference>
<dbReference type="GO" id="GO:0051301">
    <property type="term" value="P:cell division"/>
    <property type="evidence" value="ECO:0007669"/>
    <property type="project" value="UniProtKB-KW"/>
</dbReference>
<dbReference type="GO" id="GO:0006897">
    <property type="term" value="P:endocytosis"/>
    <property type="evidence" value="ECO:0007669"/>
    <property type="project" value="InterPro"/>
</dbReference>
<dbReference type="GO" id="GO:0014839">
    <property type="term" value="P:myoblast migration involved in skeletal muscle regeneration"/>
    <property type="evidence" value="ECO:0000315"/>
    <property type="project" value="MGI"/>
</dbReference>
<dbReference type="GO" id="GO:0008104">
    <property type="term" value="P:protein localization"/>
    <property type="evidence" value="ECO:0000250"/>
    <property type="project" value="UniProtKB"/>
</dbReference>
<dbReference type="GO" id="GO:0010591">
    <property type="term" value="P:regulation of lamellipodium assembly"/>
    <property type="evidence" value="ECO:0000315"/>
    <property type="project" value="MGI"/>
</dbReference>
<dbReference type="GO" id="GO:0048741">
    <property type="term" value="P:skeletal muscle fiber development"/>
    <property type="evidence" value="ECO:0000315"/>
    <property type="project" value="MGI"/>
</dbReference>
<dbReference type="GO" id="GO:0043403">
    <property type="term" value="P:skeletal muscle tissue regeneration"/>
    <property type="evidence" value="ECO:0000315"/>
    <property type="project" value="MGI"/>
</dbReference>
<dbReference type="GO" id="GO:0009826">
    <property type="term" value="P:unidimensional cell growth"/>
    <property type="evidence" value="ECO:0000250"/>
    <property type="project" value="UniProtKB"/>
</dbReference>
<dbReference type="CDD" id="cd07590">
    <property type="entry name" value="BAR_Bin3"/>
    <property type="match status" value="1"/>
</dbReference>
<dbReference type="FunFam" id="1.20.1270.60:FF:000028">
    <property type="entry name" value="Bridging integrator 3 homolog"/>
    <property type="match status" value="1"/>
</dbReference>
<dbReference type="Gene3D" id="1.20.1270.60">
    <property type="entry name" value="Arfaptin homology (AH) domain/BAR domain"/>
    <property type="match status" value="1"/>
</dbReference>
<dbReference type="InterPro" id="IPR027267">
    <property type="entry name" value="AH/BAR_dom_sf"/>
</dbReference>
<dbReference type="InterPro" id="IPR004148">
    <property type="entry name" value="BAR_dom"/>
</dbReference>
<dbReference type="InterPro" id="IPR046982">
    <property type="entry name" value="BIN3/RVS161-like"/>
</dbReference>
<dbReference type="InterPro" id="IPR037428">
    <property type="entry name" value="Bin3_BAR"/>
</dbReference>
<dbReference type="PANTHER" id="PTHR47174">
    <property type="entry name" value="BRIDGING INTEGRATOR 3"/>
    <property type="match status" value="1"/>
</dbReference>
<dbReference type="PANTHER" id="PTHR47174:SF3">
    <property type="entry name" value="BRIDGING INTEGRATOR 3"/>
    <property type="match status" value="1"/>
</dbReference>
<dbReference type="Pfam" id="PF03114">
    <property type="entry name" value="BAR"/>
    <property type="match status" value="1"/>
</dbReference>
<dbReference type="SMART" id="SM00721">
    <property type="entry name" value="BAR"/>
    <property type="match status" value="1"/>
</dbReference>
<dbReference type="SUPFAM" id="SSF103657">
    <property type="entry name" value="BAR/IMD domain-like"/>
    <property type="match status" value="1"/>
</dbReference>
<dbReference type="PROSITE" id="PS51021">
    <property type="entry name" value="BAR"/>
    <property type="match status" value="1"/>
</dbReference>
<proteinExistence type="evidence at protein level"/>
<evidence type="ECO:0000250" key="1"/>
<evidence type="ECO:0000255" key="2"/>
<evidence type="ECO:0000255" key="3">
    <source>
        <dbReference type="PROSITE-ProRule" id="PRU00361"/>
    </source>
</evidence>
<evidence type="ECO:0000256" key="4">
    <source>
        <dbReference type="SAM" id="MobiDB-lite"/>
    </source>
</evidence>